<protein>
    <recommendedName>
        <fullName evidence="1">Large ribosomal subunit protein uL1</fullName>
    </recommendedName>
    <alternativeName>
        <fullName evidence="2">50S ribosomal protein L1</fullName>
    </alternativeName>
</protein>
<evidence type="ECO:0000255" key="1">
    <source>
        <dbReference type="HAMAP-Rule" id="MF_01318"/>
    </source>
</evidence>
<evidence type="ECO:0000305" key="2"/>
<accession>B0RIR8</accession>
<reference key="1">
    <citation type="journal article" date="2008" name="J. Bacteriol.">
        <title>Genome of the actinomycete plant pathogen Clavibacter michiganensis subsp. sepedonicus suggests recent niche adaptation.</title>
        <authorList>
            <person name="Bentley S.D."/>
            <person name="Corton C."/>
            <person name="Brown S.E."/>
            <person name="Barron A."/>
            <person name="Clark L."/>
            <person name="Doggett J."/>
            <person name="Harris B."/>
            <person name="Ormond D."/>
            <person name="Quail M.A."/>
            <person name="May G."/>
            <person name="Francis D."/>
            <person name="Knudson D."/>
            <person name="Parkhill J."/>
            <person name="Ishimaru C.A."/>
        </authorList>
    </citation>
    <scope>NUCLEOTIDE SEQUENCE [LARGE SCALE GENOMIC DNA]</scope>
    <source>
        <strain>ATCC 33113 / DSM 20744 / JCM 9667 / LMG 2889 / ICMP 2535 / C-1</strain>
    </source>
</reference>
<keyword id="KW-0678">Repressor</keyword>
<keyword id="KW-0687">Ribonucleoprotein</keyword>
<keyword id="KW-0689">Ribosomal protein</keyword>
<keyword id="KW-0694">RNA-binding</keyword>
<keyword id="KW-0699">rRNA-binding</keyword>
<keyword id="KW-0810">Translation regulation</keyword>
<keyword id="KW-0820">tRNA-binding</keyword>
<feature type="chain" id="PRO_1000086277" description="Large ribosomal subunit protein uL1">
    <location>
        <begin position="1"/>
        <end position="228"/>
    </location>
</feature>
<sequence length="228" mass="23708">MAKSKAYRAAAEKIDLTKAYTASEAVELARETGSSKFDSTVEVALKLGVDPRKADQMVRGTVILPHGTGKTARVIVFATGPAAEAAIAAGADEVGGDELIEKVAGGYTSFDSAVSTPELMGKVGRLGKVLGPRGLMPNPKTGTVTPDVARAVSDIKGGKIEFRVDKHANVHFVVGKASFSPEQLSENVGAALEEIVRLKPSSSKGRYVQKATVSTTFGPGIPVDVNSI</sequence>
<comment type="function">
    <text evidence="1">Binds directly to 23S rRNA. The L1 stalk is quite mobile in the ribosome, and is involved in E site tRNA release.</text>
</comment>
<comment type="function">
    <text evidence="1">Protein L1 is also a translational repressor protein, it controls the translation of the L11 operon by binding to its mRNA.</text>
</comment>
<comment type="subunit">
    <text evidence="1">Part of the 50S ribosomal subunit.</text>
</comment>
<comment type="similarity">
    <text evidence="1">Belongs to the universal ribosomal protein uL1 family.</text>
</comment>
<gene>
    <name evidence="1" type="primary">rplA</name>
    <name type="ordered locus">CMS2625</name>
</gene>
<organism>
    <name type="scientific">Clavibacter sepedonicus</name>
    <name type="common">Clavibacter michiganensis subsp. sepedonicus</name>
    <dbReference type="NCBI Taxonomy" id="31964"/>
    <lineage>
        <taxon>Bacteria</taxon>
        <taxon>Bacillati</taxon>
        <taxon>Actinomycetota</taxon>
        <taxon>Actinomycetes</taxon>
        <taxon>Micrococcales</taxon>
        <taxon>Microbacteriaceae</taxon>
        <taxon>Clavibacter</taxon>
    </lineage>
</organism>
<dbReference type="EMBL" id="AM849034">
    <property type="protein sequence ID" value="CAQ02701.1"/>
    <property type="molecule type" value="Genomic_DNA"/>
</dbReference>
<dbReference type="RefSeq" id="WP_012299879.1">
    <property type="nucleotide sequence ID" value="NZ_MZMN01000003.1"/>
</dbReference>
<dbReference type="SMR" id="B0RIR8"/>
<dbReference type="STRING" id="31964.CMS2625"/>
<dbReference type="KEGG" id="cms:CMS2625"/>
<dbReference type="eggNOG" id="COG0081">
    <property type="taxonomic scope" value="Bacteria"/>
</dbReference>
<dbReference type="HOGENOM" id="CLU_062853_0_0_11"/>
<dbReference type="OrthoDB" id="9803740at2"/>
<dbReference type="Proteomes" id="UP000001318">
    <property type="component" value="Chromosome"/>
</dbReference>
<dbReference type="GO" id="GO:0015934">
    <property type="term" value="C:large ribosomal subunit"/>
    <property type="evidence" value="ECO:0007669"/>
    <property type="project" value="InterPro"/>
</dbReference>
<dbReference type="GO" id="GO:0019843">
    <property type="term" value="F:rRNA binding"/>
    <property type="evidence" value="ECO:0007669"/>
    <property type="project" value="UniProtKB-UniRule"/>
</dbReference>
<dbReference type="GO" id="GO:0003735">
    <property type="term" value="F:structural constituent of ribosome"/>
    <property type="evidence" value="ECO:0007669"/>
    <property type="project" value="InterPro"/>
</dbReference>
<dbReference type="GO" id="GO:0000049">
    <property type="term" value="F:tRNA binding"/>
    <property type="evidence" value="ECO:0007669"/>
    <property type="project" value="UniProtKB-KW"/>
</dbReference>
<dbReference type="GO" id="GO:0006417">
    <property type="term" value="P:regulation of translation"/>
    <property type="evidence" value="ECO:0007669"/>
    <property type="project" value="UniProtKB-KW"/>
</dbReference>
<dbReference type="GO" id="GO:0006412">
    <property type="term" value="P:translation"/>
    <property type="evidence" value="ECO:0007669"/>
    <property type="project" value="UniProtKB-UniRule"/>
</dbReference>
<dbReference type="CDD" id="cd00403">
    <property type="entry name" value="Ribosomal_L1"/>
    <property type="match status" value="1"/>
</dbReference>
<dbReference type="FunFam" id="3.40.50.790:FF:000001">
    <property type="entry name" value="50S ribosomal protein L1"/>
    <property type="match status" value="1"/>
</dbReference>
<dbReference type="Gene3D" id="3.30.190.20">
    <property type="match status" value="1"/>
</dbReference>
<dbReference type="Gene3D" id="3.40.50.790">
    <property type="match status" value="1"/>
</dbReference>
<dbReference type="HAMAP" id="MF_01318_B">
    <property type="entry name" value="Ribosomal_uL1_B"/>
    <property type="match status" value="1"/>
</dbReference>
<dbReference type="InterPro" id="IPR005878">
    <property type="entry name" value="Ribosom_uL1_bac-type"/>
</dbReference>
<dbReference type="InterPro" id="IPR002143">
    <property type="entry name" value="Ribosomal_uL1"/>
</dbReference>
<dbReference type="InterPro" id="IPR023674">
    <property type="entry name" value="Ribosomal_uL1-like"/>
</dbReference>
<dbReference type="InterPro" id="IPR028364">
    <property type="entry name" value="Ribosomal_uL1/biogenesis"/>
</dbReference>
<dbReference type="InterPro" id="IPR016095">
    <property type="entry name" value="Ribosomal_uL1_3-a/b-sand"/>
</dbReference>
<dbReference type="InterPro" id="IPR023673">
    <property type="entry name" value="Ribosomal_uL1_CS"/>
</dbReference>
<dbReference type="NCBIfam" id="TIGR01169">
    <property type="entry name" value="rplA_bact"/>
    <property type="match status" value="1"/>
</dbReference>
<dbReference type="PANTHER" id="PTHR36427">
    <property type="entry name" value="54S RIBOSOMAL PROTEIN L1, MITOCHONDRIAL"/>
    <property type="match status" value="1"/>
</dbReference>
<dbReference type="PANTHER" id="PTHR36427:SF3">
    <property type="entry name" value="LARGE RIBOSOMAL SUBUNIT PROTEIN UL1M"/>
    <property type="match status" value="1"/>
</dbReference>
<dbReference type="Pfam" id="PF00687">
    <property type="entry name" value="Ribosomal_L1"/>
    <property type="match status" value="1"/>
</dbReference>
<dbReference type="PIRSF" id="PIRSF002155">
    <property type="entry name" value="Ribosomal_L1"/>
    <property type="match status" value="1"/>
</dbReference>
<dbReference type="SUPFAM" id="SSF56808">
    <property type="entry name" value="Ribosomal protein L1"/>
    <property type="match status" value="1"/>
</dbReference>
<dbReference type="PROSITE" id="PS01199">
    <property type="entry name" value="RIBOSOMAL_L1"/>
    <property type="match status" value="1"/>
</dbReference>
<name>RL1_CLASE</name>
<proteinExistence type="inferred from homology"/>